<reference key="1">
    <citation type="journal article" date="2001" name="Plant Mol. Biol.">
        <title>Arabidopsis E2F1 binds a sequence present in the promoter of S-phase-regulated gene AtCDC6 and is a member of a multigene family with differential activities.</title>
        <authorList>
            <person name="de Jager S.M."/>
            <person name="Menges M."/>
            <person name="Bauer U.M."/>
            <person name="Murra J.A."/>
        </authorList>
    </citation>
    <scope>NUCLEOTIDE SEQUENCE [MRNA]</scope>
    <scope>DEVELOPMENTAL STAGE</scope>
</reference>
<reference key="2">
    <citation type="journal article" date="2002" name="J. Biol. Chem.">
        <title>The E2F family of transcription factors from Arabidopsis thaliana. Novel and conserved components of the retinoblastoma/E2F pathway in plants.</title>
        <authorList>
            <person name="Mariconti L."/>
            <person name="Pellegrini B."/>
            <person name="Cantoni R."/>
            <person name="Stevens R."/>
            <person name="Bergounioux C."/>
            <person name="Cella R."/>
            <person name="Albani D."/>
        </authorList>
    </citation>
    <scope>NUCLEOTIDE SEQUENCE [MRNA]</scope>
    <scope>FUNCTION</scope>
    <scope>INTERACTION WITH DPA AND DPB</scope>
    <scope>DEVELOPMENTAL STAGE</scope>
    <scope>GENE FAMILY</scope>
    <scope>NOMENCLATURE</scope>
</reference>
<reference key="3">
    <citation type="journal article" date="2002" name="Plant Physiol.">
        <title>Interaction of the Arabidopsis E2F and DP proteins confers their concomitant nuclear translocation and transactivation.</title>
        <authorList>
            <person name="Kosugi S."/>
            <person name="Ohashi Y."/>
        </authorList>
    </citation>
    <scope>NUCLEOTIDE SEQUENCE [MRNA]</scope>
    <scope>FUNCTION</scope>
    <scope>SUBCELLULAR LOCATION</scope>
    <scope>INTERACTION WITH DPA AND DPB</scope>
    <source>
        <strain>cv. Columbia</strain>
    </source>
</reference>
<reference key="4">
    <citation type="journal article" date="2000" name="Nature">
        <title>Sequence and analysis of chromosome 1 of the plant Arabidopsis thaliana.</title>
        <authorList>
            <person name="Theologis A."/>
            <person name="Ecker J.R."/>
            <person name="Palm C.J."/>
            <person name="Federspiel N.A."/>
            <person name="Kaul S."/>
            <person name="White O."/>
            <person name="Alonso J."/>
            <person name="Altafi H."/>
            <person name="Araujo R."/>
            <person name="Bowman C.L."/>
            <person name="Brooks S.Y."/>
            <person name="Buehler E."/>
            <person name="Chan A."/>
            <person name="Chao Q."/>
            <person name="Chen H."/>
            <person name="Cheuk R.F."/>
            <person name="Chin C.W."/>
            <person name="Chung M.K."/>
            <person name="Conn L."/>
            <person name="Conway A.B."/>
            <person name="Conway A.R."/>
            <person name="Creasy T.H."/>
            <person name="Dewar K."/>
            <person name="Dunn P."/>
            <person name="Etgu P."/>
            <person name="Feldblyum T.V."/>
            <person name="Feng J.-D."/>
            <person name="Fong B."/>
            <person name="Fujii C.Y."/>
            <person name="Gill J.E."/>
            <person name="Goldsmith A.D."/>
            <person name="Haas B."/>
            <person name="Hansen N.F."/>
            <person name="Hughes B."/>
            <person name="Huizar L."/>
            <person name="Hunter J.L."/>
            <person name="Jenkins J."/>
            <person name="Johnson-Hopson C."/>
            <person name="Khan S."/>
            <person name="Khaykin E."/>
            <person name="Kim C.J."/>
            <person name="Koo H.L."/>
            <person name="Kremenetskaia I."/>
            <person name="Kurtz D.B."/>
            <person name="Kwan A."/>
            <person name="Lam B."/>
            <person name="Langin-Hooper S."/>
            <person name="Lee A."/>
            <person name="Lee J.M."/>
            <person name="Lenz C.A."/>
            <person name="Li J.H."/>
            <person name="Li Y.-P."/>
            <person name="Lin X."/>
            <person name="Liu S.X."/>
            <person name="Liu Z.A."/>
            <person name="Luros J.S."/>
            <person name="Maiti R."/>
            <person name="Marziali A."/>
            <person name="Militscher J."/>
            <person name="Miranda M."/>
            <person name="Nguyen M."/>
            <person name="Nierman W.C."/>
            <person name="Osborne B.I."/>
            <person name="Pai G."/>
            <person name="Peterson J."/>
            <person name="Pham P.K."/>
            <person name="Rizzo M."/>
            <person name="Rooney T."/>
            <person name="Rowley D."/>
            <person name="Sakano H."/>
            <person name="Salzberg S.L."/>
            <person name="Schwartz J.R."/>
            <person name="Shinn P."/>
            <person name="Southwick A.M."/>
            <person name="Sun H."/>
            <person name="Tallon L.J."/>
            <person name="Tambunga G."/>
            <person name="Toriumi M.J."/>
            <person name="Town C.D."/>
            <person name="Utterback T."/>
            <person name="Van Aken S."/>
            <person name="Vaysberg M."/>
            <person name="Vysotskaia V.S."/>
            <person name="Walker M."/>
            <person name="Wu D."/>
            <person name="Yu G."/>
            <person name="Fraser C.M."/>
            <person name="Venter J.C."/>
            <person name="Davis R.W."/>
        </authorList>
    </citation>
    <scope>NUCLEOTIDE SEQUENCE [LARGE SCALE GENOMIC DNA]</scope>
    <source>
        <strain>cv. Columbia</strain>
    </source>
</reference>
<reference key="5">
    <citation type="journal article" date="2017" name="Plant J.">
        <title>Araport11: a complete reannotation of the Arabidopsis thaliana reference genome.</title>
        <authorList>
            <person name="Cheng C.Y."/>
            <person name="Krishnakumar V."/>
            <person name="Chan A.P."/>
            <person name="Thibaud-Nissen F."/>
            <person name="Schobel S."/>
            <person name="Town C.D."/>
        </authorList>
    </citation>
    <scope>GENOME REANNOTATION</scope>
    <source>
        <strain>cv. Columbia</strain>
    </source>
</reference>
<reference key="6">
    <citation type="journal article" date="2003" name="Science">
        <title>Empirical analysis of transcriptional activity in the Arabidopsis genome.</title>
        <authorList>
            <person name="Yamada K."/>
            <person name="Lim J."/>
            <person name="Dale J.M."/>
            <person name="Chen H."/>
            <person name="Shinn P."/>
            <person name="Palm C.J."/>
            <person name="Southwick A.M."/>
            <person name="Wu H.C."/>
            <person name="Kim C.J."/>
            <person name="Nguyen M."/>
            <person name="Pham P.K."/>
            <person name="Cheuk R.F."/>
            <person name="Karlin-Newmann G."/>
            <person name="Liu S.X."/>
            <person name="Lam B."/>
            <person name="Sakano H."/>
            <person name="Wu T."/>
            <person name="Yu G."/>
            <person name="Miranda M."/>
            <person name="Quach H.L."/>
            <person name="Tripp M."/>
            <person name="Chang C.H."/>
            <person name="Lee J.M."/>
            <person name="Toriumi M.J."/>
            <person name="Chan M.M."/>
            <person name="Tang C.C."/>
            <person name="Onodera C.S."/>
            <person name="Deng J.M."/>
            <person name="Akiyama K."/>
            <person name="Ansari Y."/>
            <person name="Arakawa T."/>
            <person name="Banh J."/>
            <person name="Banno F."/>
            <person name="Bowser L."/>
            <person name="Brooks S.Y."/>
            <person name="Carninci P."/>
            <person name="Chao Q."/>
            <person name="Choy N."/>
            <person name="Enju A."/>
            <person name="Goldsmith A.D."/>
            <person name="Gurjal M."/>
            <person name="Hansen N.F."/>
            <person name="Hayashizaki Y."/>
            <person name="Johnson-Hopson C."/>
            <person name="Hsuan V.W."/>
            <person name="Iida K."/>
            <person name="Karnes M."/>
            <person name="Khan S."/>
            <person name="Koesema E."/>
            <person name="Ishida J."/>
            <person name="Jiang P.X."/>
            <person name="Jones T."/>
            <person name="Kawai J."/>
            <person name="Kamiya A."/>
            <person name="Meyers C."/>
            <person name="Nakajima M."/>
            <person name="Narusaka M."/>
            <person name="Seki M."/>
            <person name="Sakurai T."/>
            <person name="Satou M."/>
            <person name="Tamse R."/>
            <person name="Vaysberg M."/>
            <person name="Wallender E.K."/>
            <person name="Wong C."/>
            <person name="Yamamura Y."/>
            <person name="Yuan S."/>
            <person name="Shinozaki K."/>
            <person name="Davis R.W."/>
            <person name="Theologis A."/>
            <person name="Ecker J.R."/>
        </authorList>
    </citation>
    <scope>NUCLEOTIDE SEQUENCE [LARGE SCALE MRNA]</scope>
    <source>
        <strain>cv. Columbia</strain>
    </source>
</reference>
<reference key="7">
    <citation type="journal article" date="2002" name="Plant Cell">
        <title>Genome-wide analysis of core cell cycle genes in Arabidopsis.</title>
        <authorList>
            <person name="Vandepoele K."/>
            <person name="Raes J."/>
            <person name="de Veylder L."/>
            <person name="Rouze P."/>
            <person name="Rombauts S."/>
            <person name="Inze D."/>
        </authorList>
    </citation>
    <scope>GENE FAMILY</scope>
    <scope>NOMENCLATURE</scope>
</reference>
<reference key="8">
    <citation type="journal article" date="2002" name="Plant Cell">
        <title>Arabidopsis E2Fc functions in cell division and is degraded by the ubiquitin-SCF(AtSKP2) pathway in response to light.</title>
        <authorList>
            <person name="del Pozo J.C."/>
            <person name="Boniotti M.B."/>
            <person name="Gutierrez C."/>
        </authorList>
    </citation>
    <scope>FUNCTION</scope>
    <scope>DEVELOPMENTAL STAGE</scope>
    <scope>TISSUE SPECIFICITY</scope>
    <scope>INTERACTION WITH SKP2A; CDKA-1 AND MAIZE RBR1</scope>
    <scope>INDUCTION BY LIGHT</scope>
    <scope>PHOSPHORYLATION</scope>
</reference>
<reference key="9">
    <citation type="journal article" date="2006" name="Plant Cell">
        <title>The balance between cell division and endoreplication depends on E2FC-DPB, transcription factors regulated by the ubiquitin-SCFSKP2A pathway in Arabidopsis.</title>
        <authorList>
            <person name="del Pozo J.C."/>
            <person name="Diaz-Trivino S."/>
            <person name="Cisneros N."/>
            <person name="Gutierrez C."/>
        </authorList>
    </citation>
    <scope>FUNCTION</scope>
    <scope>TISSUE SPECIFICITY</scope>
    <scope>INTERACTION WITH DPB</scope>
</reference>
<reference key="10">
    <citation type="journal article" date="2008" name="Plant Cell">
        <title>Distinct light-initiated gene expression and cell cycle programs in the shoot apex and cotyledons of Arabidopsis.</title>
        <authorList>
            <person name="Lopez-Juez E."/>
            <person name="Dillon E."/>
            <person name="Magyar Z."/>
            <person name="Khan S."/>
            <person name="Hazeldine S."/>
            <person name="de Jager S.M."/>
            <person name="Murray J.A."/>
            <person name="Beemster G.T."/>
            <person name="Boegre L."/>
            <person name="Shanahan H."/>
        </authorList>
    </citation>
    <scope>INDUCTION BY LIGHT</scope>
</reference>
<reference key="11">
    <citation type="journal article" date="2009" name="Plant Mol. Biol.">
        <title>Dissecting regulatory pathways of G1/S control in Arabidopsis: common and distinct targets of CYCD3;1, E2Fa and E2Fc.</title>
        <authorList>
            <person name="de Jager S.M."/>
            <person name="Scofield S."/>
            <person name="Huntley R.P."/>
            <person name="Robinson A.S."/>
            <person name="den Boer B.G."/>
            <person name="Murray J.A."/>
        </authorList>
    </citation>
    <scope>FUNCTION</scope>
</reference>
<reference key="12">
    <citation type="journal article" date="2015" name="EMBO J.">
        <title>Transcriptional repression by MYB3R proteins regulates plant organ growth.</title>
        <authorList>
            <person name="Kobayashi K."/>
            <person name="Suzuki T."/>
            <person name="Iwata E."/>
            <person name="Nakamichi N."/>
            <person name="Suzuki T."/>
            <person name="Chen P."/>
            <person name="Ohtani M."/>
            <person name="Ishida T."/>
            <person name="Hosoya H."/>
            <person name="Mueller S."/>
            <person name="Leviczky T."/>
            <person name="Pettko-Szandtner A."/>
            <person name="Darula Z."/>
            <person name="Iwamoto A."/>
            <person name="Nomoto M."/>
            <person name="Tada Y."/>
            <person name="Higashiyama T."/>
            <person name="Demura T."/>
            <person name="Doonan J.H."/>
            <person name="Hauser M.T."/>
            <person name="Sugimoto K."/>
            <person name="Umeda M."/>
            <person name="Magyar Z."/>
            <person name="Boegre L."/>
            <person name="Ito M."/>
        </authorList>
    </citation>
    <scope>INTERACTION WITH MYB3R3</scope>
    <source>
        <strain>cv. Columbia</strain>
    </source>
</reference>
<evidence type="ECO:0000255" key="1"/>
<evidence type="ECO:0000256" key="2">
    <source>
        <dbReference type="SAM" id="MobiDB-lite"/>
    </source>
</evidence>
<evidence type="ECO:0000269" key="3">
    <source>
    </source>
</evidence>
<evidence type="ECO:0000269" key="4">
    <source>
    </source>
</evidence>
<evidence type="ECO:0000269" key="5">
    <source>
    </source>
</evidence>
<evidence type="ECO:0000269" key="6">
    <source>
    </source>
</evidence>
<evidence type="ECO:0000269" key="7">
    <source>
    </source>
</evidence>
<evidence type="ECO:0000269" key="8">
    <source>
    </source>
</evidence>
<evidence type="ECO:0000269" key="9">
    <source>
    </source>
</evidence>
<evidence type="ECO:0000269" key="10">
    <source>
    </source>
</evidence>
<evidence type="ECO:0000305" key="11"/>
<comment type="function">
    <text evidence="4 5 6 7 9">Involved in transcriptional repression. May act by repressing E2F-regulated genes in mature differentiated cells, but is not an antagonist of E2FA. Restricts cell division and is involved in the coordination between cell proliferation and endoreduplication during development. May play a role during the transition from skotomorphogenesis to photomorphogenesis. Regulated by phosphorylation-dependent proteolysis via the protein-ubiquitin ligase SCF(SKP2A) complex.</text>
</comment>
<comment type="subunit">
    <text evidence="4 5 6 7 10">Heterodimer with DP proteins. Interacts preferentially with DPB, but also with DPA. No interaction with DPB when phosphorylated. Interacts with SKP2A, CDKA-1 and maize retinoblastoma-related protein RBR1. Component of a DREAM-like complex which modulates a variety of developmentally regulated genes and of the mitotic genes in proliferating and differentiated cells. Interacts with MYB3R3 at later stages of leaves development (PubMed:26069325).</text>
</comment>
<comment type="interaction">
    <interactant intactId="EBI-2131346">
        <id>Q9FV70</id>
    </interactant>
    <interactant intactId="EBI-398590">
        <id>Q9LKZ3</id>
        <label>RBR1</label>
    </interactant>
    <organismsDiffer>false</organismsDiffer>
    <experiments>2</experiments>
</comment>
<comment type="subcellular location">
    <subcellularLocation>
        <location evidence="5">Cytoplasm</location>
    </subcellularLocation>
    <text>Interaction with either DPA or DPB are unable to induce a nuclear localization.</text>
</comment>
<comment type="alternative products">
    <event type="alternative splicing"/>
    <isoform>
        <id>Q9FV70-1</id>
        <name>1</name>
        <sequence type="displayed"/>
    </isoform>
    <text>A number of isoforms are produced. According to EST sequences.</text>
</comment>
<comment type="tissue specificity">
    <text evidence="6 7">Expressed in meristematic areas, vascular tissues, apical part of the roots, cotyledons, upper region of the hypocotyls, trichomes, young flower buds and pollen grains.</text>
</comment>
<comment type="developmental stage">
    <text evidence="3 4 6">Expressed in a cell cycle-dependent manner. Not detected at the G1/S transition, but increases during the progression into S phase and peaks after the passage into G2.</text>
</comment>
<comment type="induction">
    <text evidence="6 8">Down-regulated by light.</text>
</comment>
<comment type="domain">
    <text>The N-terminal region (1-100) is important for both SKP2A binding and ubiquitin-mediated degradation.</text>
</comment>
<comment type="PTM">
    <text evidence="6">Phosphorylated by cyclin-dependent kinase. Phosphorylation is necessary to target E2FC for proteolysis.</text>
</comment>
<comment type="similarity">
    <text evidence="11">Belongs to the E2F/DP family.</text>
</comment>
<comment type="sequence caution" evidence="11">
    <conflict type="erroneous gene model prediction">
        <sequence resource="EMBL-CDS" id="AAF99806"/>
    </conflict>
</comment>
<gene>
    <name type="primary">E2FC</name>
    <name type="synonym">E2F2</name>
    <name type="ordered locus">At1g47870</name>
    <name type="ORF">T2E6.2</name>
</gene>
<name>E2FC_ARATH</name>
<sequence length="396" mass="44488">MAATSNSGEDPTLSYHHRSPFRFELLQSISSSDPRYSSLTPSSTNRPFSVSQSLPNSQLSPLISPHWDDSYSQITQKVQKSRKNHRIQLGSIANMSGGESIDIAKVIVKQESSPQNVKRVYNKSKGGTKLLKAGKRMANGEVQNGGLNGASINCRYDSSLGLLTKKFVKLIQEAEDGTLDLNYCAVVLEVQKRRIYDITNVLEGIGLIEKTTKNHIRWKGADNLGQKDLGDQISRLKSEVESMQSEESRLDDLIRERQEALRSLEEDDYCRRYMFMTEEDITSLPRFQNQTLLAIKAPTASYIEVPDPDEMSFPQQYRMVIRSRMGPIDVYLLSKYKGDSAETSDKLGNESDQKAPVGVDTPSLKIVTSDTDLKADYWFESDAEVSLTDLWSNFNS</sequence>
<proteinExistence type="evidence at protein level"/>
<keyword id="KW-0025">Alternative splicing</keyword>
<keyword id="KW-0131">Cell cycle</keyword>
<keyword id="KW-0175">Coiled coil</keyword>
<keyword id="KW-0963">Cytoplasm</keyword>
<keyword id="KW-0238">DNA-binding</keyword>
<keyword id="KW-1185">Reference proteome</keyword>
<keyword id="KW-0678">Repressor</keyword>
<keyword id="KW-0804">Transcription</keyword>
<keyword id="KW-0805">Transcription regulation</keyword>
<organism>
    <name type="scientific">Arabidopsis thaliana</name>
    <name type="common">Mouse-ear cress</name>
    <dbReference type="NCBI Taxonomy" id="3702"/>
    <lineage>
        <taxon>Eukaryota</taxon>
        <taxon>Viridiplantae</taxon>
        <taxon>Streptophyta</taxon>
        <taxon>Embryophyta</taxon>
        <taxon>Tracheophyta</taxon>
        <taxon>Spermatophyta</taxon>
        <taxon>Magnoliopsida</taxon>
        <taxon>eudicotyledons</taxon>
        <taxon>Gunneridae</taxon>
        <taxon>Pentapetalae</taxon>
        <taxon>rosids</taxon>
        <taxon>malvids</taxon>
        <taxon>Brassicales</taxon>
        <taxon>Brassicaceae</taxon>
        <taxon>Camelineae</taxon>
        <taxon>Arabidopsis</taxon>
    </lineage>
</organism>
<accession>Q9FV70</accession>
<accession>Q94LY0</accession>
<accession>Q9FZG7</accession>
<feature type="chain" id="PRO_0000406291" description="Transcription factor E2FC">
    <location>
        <begin position="1"/>
        <end position="396"/>
    </location>
</feature>
<feature type="DNA-binding region" evidence="1">
    <location>
        <begin position="155"/>
        <end position="220"/>
    </location>
</feature>
<feature type="region of interest" description="Disordered" evidence="2">
    <location>
        <begin position="34"/>
        <end position="57"/>
    </location>
</feature>
<feature type="region of interest" description="Leucine-zipper" evidence="1">
    <location>
        <begin position="236"/>
        <end position="264"/>
    </location>
</feature>
<feature type="region of interest" description="Retinoblastoma protein binding" evidence="1">
    <location>
        <begin position="376"/>
        <end position="391"/>
    </location>
</feature>
<feature type="coiled-coil region" evidence="1">
    <location>
        <begin position="226"/>
        <end position="268"/>
    </location>
</feature>
<feature type="compositionally biased region" description="Polar residues" evidence="2">
    <location>
        <begin position="34"/>
        <end position="48"/>
    </location>
</feature>
<feature type="sequence conflict" description="In Ref. 3; BAB55644." evidence="11" ref="3">
    <original>A</original>
    <variation>T</variation>
    <location>
        <position position="297"/>
    </location>
</feature>
<protein>
    <recommendedName>
        <fullName>Transcription factor E2FC</fullName>
    </recommendedName>
    <alternativeName>
        <fullName>E2F transcription factor-2</fullName>
        <shortName>AtE2F2</shortName>
    </alternativeName>
</protein>
<dbReference type="EMBL" id="AF242581">
    <property type="protein sequence ID" value="AAG17609.1"/>
    <property type="molecule type" value="mRNA"/>
</dbReference>
<dbReference type="EMBL" id="AJ417834">
    <property type="protein sequence ID" value="CAD10631.1"/>
    <property type="molecule type" value="mRNA"/>
</dbReference>
<dbReference type="EMBL" id="AB050114">
    <property type="protein sequence ID" value="BAB55644.1"/>
    <property type="molecule type" value="mRNA"/>
</dbReference>
<dbReference type="EMBL" id="AC012463">
    <property type="protein sequence ID" value="AAF99806.1"/>
    <property type="status" value="ALT_SEQ"/>
    <property type="molecule type" value="Genomic_DNA"/>
</dbReference>
<dbReference type="EMBL" id="CP002684">
    <property type="protein sequence ID" value="AEE32222.1"/>
    <property type="molecule type" value="Genomic_DNA"/>
</dbReference>
<dbReference type="EMBL" id="AY045636">
    <property type="protein sequence ID" value="AAK73994.1"/>
    <property type="molecule type" value="mRNA"/>
</dbReference>
<dbReference type="EMBL" id="AY058231">
    <property type="protein sequence ID" value="AAL15405.1"/>
    <property type="molecule type" value="mRNA"/>
</dbReference>
<dbReference type="PIR" id="B96519">
    <property type="entry name" value="B96519"/>
</dbReference>
<dbReference type="RefSeq" id="NP_175222.1">
    <molecule id="Q9FV70-1"/>
    <property type="nucleotide sequence ID" value="NM_103684.3"/>
</dbReference>
<dbReference type="SMR" id="Q9FV70"/>
<dbReference type="BioGRID" id="26427">
    <property type="interactions" value="14"/>
</dbReference>
<dbReference type="FunCoup" id="Q9FV70">
    <property type="interactions" value="2142"/>
</dbReference>
<dbReference type="IntAct" id="Q9FV70">
    <property type="interactions" value="7"/>
</dbReference>
<dbReference type="STRING" id="3702.Q9FV70"/>
<dbReference type="iPTMnet" id="Q9FV70"/>
<dbReference type="PaxDb" id="3702-AT1G47870.1"/>
<dbReference type="ProteomicsDB" id="222034">
    <molecule id="Q9FV70-1"/>
</dbReference>
<dbReference type="EnsemblPlants" id="AT1G47870.1">
    <molecule id="Q9FV70-1"/>
    <property type="protein sequence ID" value="AT1G47870.1"/>
    <property type="gene ID" value="AT1G47870"/>
</dbReference>
<dbReference type="GeneID" id="841202"/>
<dbReference type="Gramene" id="AT1G47870.1">
    <molecule id="Q9FV70-1"/>
    <property type="protein sequence ID" value="AT1G47870.1"/>
    <property type="gene ID" value="AT1G47870"/>
</dbReference>
<dbReference type="KEGG" id="ath:AT1G47870"/>
<dbReference type="Araport" id="AT1G47870"/>
<dbReference type="TAIR" id="AT1G47870">
    <property type="gene designation" value="ATE2F2"/>
</dbReference>
<dbReference type="eggNOG" id="KOG2577">
    <property type="taxonomic scope" value="Eukaryota"/>
</dbReference>
<dbReference type="InParanoid" id="Q9FV70"/>
<dbReference type="PhylomeDB" id="Q9FV70"/>
<dbReference type="PRO" id="PR:Q9FV70"/>
<dbReference type="Proteomes" id="UP000006548">
    <property type="component" value="Chromosome 1"/>
</dbReference>
<dbReference type="ExpressionAtlas" id="Q9FV70">
    <property type="expression patterns" value="baseline and differential"/>
</dbReference>
<dbReference type="GO" id="GO:0005737">
    <property type="term" value="C:cytoplasm"/>
    <property type="evidence" value="ECO:0007669"/>
    <property type="project" value="UniProtKB-SubCell"/>
</dbReference>
<dbReference type="GO" id="GO:0070176">
    <property type="term" value="C:DRM complex"/>
    <property type="evidence" value="ECO:0000314"/>
    <property type="project" value="TAIR"/>
</dbReference>
<dbReference type="GO" id="GO:0005730">
    <property type="term" value="C:nucleolus"/>
    <property type="evidence" value="ECO:0007005"/>
    <property type="project" value="TAIR"/>
</dbReference>
<dbReference type="GO" id="GO:0005634">
    <property type="term" value="C:nucleus"/>
    <property type="evidence" value="ECO:0000314"/>
    <property type="project" value="TAIR"/>
</dbReference>
<dbReference type="GO" id="GO:0003677">
    <property type="term" value="F:DNA binding"/>
    <property type="evidence" value="ECO:0000314"/>
    <property type="project" value="TAIR"/>
</dbReference>
<dbReference type="GO" id="GO:0003700">
    <property type="term" value="F:DNA-binding transcription factor activity"/>
    <property type="evidence" value="ECO:0000314"/>
    <property type="project" value="TAIR"/>
</dbReference>
<dbReference type="GO" id="GO:0046982">
    <property type="term" value="F:protein heterodimerization activity"/>
    <property type="evidence" value="ECO:0000353"/>
    <property type="project" value="TAIR"/>
</dbReference>
<dbReference type="GO" id="GO:0000978">
    <property type="term" value="F:RNA polymerase II cis-regulatory region sequence-specific DNA binding"/>
    <property type="evidence" value="ECO:0007669"/>
    <property type="project" value="InterPro"/>
</dbReference>
<dbReference type="GO" id="GO:0000976">
    <property type="term" value="F:transcription cis-regulatory region binding"/>
    <property type="evidence" value="ECO:0000353"/>
    <property type="project" value="TAIR"/>
</dbReference>
<dbReference type="GO" id="GO:0051301">
    <property type="term" value="P:cell division"/>
    <property type="evidence" value="ECO:0000315"/>
    <property type="project" value="TAIR"/>
</dbReference>
<dbReference type="GO" id="GO:0000902">
    <property type="term" value="P:cell morphogenesis"/>
    <property type="evidence" value="ECO:0000315"/>
    <property type="project" value="TAIR"/>
</dbReference>
<dbReference type="GO" id="GO:0042023">
    <property type="term" value="P:DNA endoreduplication"/>
    <property type="evidence" value="ECO:0000315"/>
    <property type="project" value="TAIR"/>
</dbReference>
<dbReference type="GO" id="GO:0019760">
    <property type="term" value="P:glucosinolate metabolic process"/>
    <property type="evidence" value="ECO:0000315"/>
    <property type="project" value="TAIR"/>
</dbReference>
<dbReference type="GO" id="GO:0051782">
    <property type="term" value="P:negative regulation of cell division"/>
    <property type="evidence" value="ECO:0000315"/>
    <property type="project" value="TAIR"/>
</dbReference>
<dbReference type="GO" id="GO:0043068">
    <property type="term" value="P:positive regulation of programmed cell death"/>
    <property type="evidence" value="ECO:0000315"/>
    <property type="project" value="TAIR"/>
</dbReference>
<dbReference type="GO" id="GO:0006357">
    <property type="term" value="P:regulation of transcription by RNA polymerase II"/>
    <property type="evidence" value="ECO:0007669"/>
    <property type="project" value="InterPro"/>
</dbReference>
<dbReference type="CDD" id="cd14660">
    <property type="entry name" value="E2F_DD"/>
    <property type="match status" value="1"/>
</dbReference>
<dbReference type="FunFam" id="1.10.10.10:FF:000008">
    <property type="entry name" value="E2F transcription factor 1"/>
    <property type="match status" value="1"/>
</dbReference>
<dbReference type="Gene3D" id="6.10.250.540">
    <property type="match status" value="1"/>
</dbReference>
<dbReference type="Gene3D" id="1.10.10.10">
    <property type="entry name" value="Winged helix-like DNA-binding domain superfamily/Winged helix DNA-binding domain"/>
    <property type="match status" value="1"/>
</dbReference>
<dbReference type="InterPro" id="IPR015633">
    <property type="entry name" value="E2F"/>
</dbReference>
<dbReference type="InterPro" id="IPR037241">
    <property type="entry name" value="E2F-DP_heterodim"/>
</dbReference>
<dbReference type="InterPro" id="IPR032198">
    <property type="entry name" value="E2F_CC-MB"/>
</dbReference>
<dbReference type="InterPro" id="IPR003316">
    <property type="entry name" value="E2F_WHTH_DNA-bd_dom"/>
</dbReference>
<dbReference type="InterPro" id="IPR036388">
    <property type="entry name" value="WH-like_DNA-bd_sf"/>
</dbReference>
<dbReference type="InterPro" id="IPR036390">
    <property type="entry name" value="WH_DNA-bd_sf"/>
</dbReference>
<dbReference type="PANTHER" id="PTHR12081">
    <property type="entry name" value="TRANSCRIPTION FACTOR E2F"/>
    <property type="match status" value="1"/>
</dbReference>
<dbReference type="PANTHER" id="PTHR12081:SF51">
    <property type="entry name" value="TRANSCRIPTION FACTOR E2FC"/>
    <property type="match status" value="1"/>
</dbReference>
<dbReference type="Pfam" id="PF16421">
    <property type="entry name" value="E2F_CC-MB"/>
    <property type="match status" value="1"/>
</dbReference>
<dbReference type="Pfam" id="PF02319">
    <property type="entry name" value="E2F_TDP"/>
    <property type="match status" value="1"/>
</dbReference>
<dbReference type="SMART" id="SM01372">
    <property type="entry name" value="E2F_TDP"/>
    <property type="match status" value="1"/>
</dbReference>
<dbReference type="SUPFAM" id="SSF144074">
    <property type="entry name" value="E2F-DP heterodimerization region"/>
    <property type="match status" value="1"/>
</dbReference>
<dbReference type="SUPFAM" id="SSF46785">
    <property type="entry name" value="Winged helix' DNA-binding domain"/>
    <property type="match status" value="1"/>
</dbReference>